<proteinExistence type="inferred from homology"/>
<keyword id="KW-0028">Amino-acid biosynthesis</keyword>
<keyword id="KW-0067">ATP-binding</keyword>
<keyword id="KW-0963">Cytoplasm</keyword>
<keyword id="KW-0418">Kinase</keyword>
<keyword id="KW-0547">Nucleotide-binding</keyword>
<keyword id="KW-1185">Reference proteome</keyword>
<keyword id="KW-0791">Threonine biosynthesis</keyword>
<keyword id="KW-0808">Transferase</keyword>
<comment type="function">
    <text evidence="1">Catalyzes the ATP-dependent phosphorylation of L-homoserine to L-homoserine phosphate.</text>
</comment>
<comment type="catalytic activity">
    <reaction evidence="1">
        <text>L-homoserine + ATP = O-phospho-L-homoserine + ADP + H(+)</text>
        <dbReference type="Rhea" id="RHEA:13985"/>
        <dbReference type="ChEBI" id="CHEBI:15378"/>
        <dbReference type="ChEBI" id="CHEBI:30616"/>
        <dbReference type="ChEBI" id="CHEBI:57476"/>
        <dbReference type="ChEBI" id="CHEBI:57590"/>
        <dbReference type="ChEBI" id="CHEBI:456216"/>
        <dbReference type="EC" id="2.7.1.39"/>
    </reaction>
</comment>
<comment type="pathway">
    <text evidence="1">Amino-acid biosynthesis; L-threonine biosynthesis; L-threonine from L-aspartate: step 4/5.</text>
</comment>
<comment type="subcellular location">
    <subcellularLocation>
        <location evidence="1">Cytoplasm</location>
    </subcellularLocation>
</comment>
<comment type="similarity">
    <text evidence="1">Belongs to the GHMP kinase family. Homoserine kinase subfamily.</text>
</comment>
<name>KHSE_ECO45</name>
<feature type="chain" id="PRO_1000122416" description="Homoserine kinase">
    <location>
        <begin position="1"/>
        <end position="310"/>
    </location>
</feature>
<feature type="binding site" evidence="1">
    <location>
        <begin position="91"/>
        <end position="101"/>
    </location>
    <ligand>
        <name>ATP</name>
        <dbReference type="ChEBI" id="CHEBI:30616"/>
    </ligand>
</feature>
<reference key="1">
    <citation type="journal article" date="2009" name="PLoS Genet.">
        <title>Organised genome dynamics in the Escherichia coli species results in highly diverse adaptive paths.</title>
        <authorList>
            <person name="Touchon M."/>
            <person name="Hoede C."/>
            <person name="Tenaillon O."/>
            <person name="Barbe V."/>
            <person name="Baeriswyl S."/>
            <person name="Bidet P."/>
            <person name="Bingen E."/>
            <person name="Bonacorsi S."/>
            <person name="Bouchier C."/>
            <person name="Bouvet O."/>
            <person name="Calteau A."/>
            <person name="Chiapello H."/>
            <person name="Clermont O."/>
            <person name="Cruveiller S."/>
            <person name="Danchin A."/>
            <person name="Diard M."/>
            <person name="Dossat C."/>
            <person name="Karoui M.E."/>
            <person name="Frapy E."/>
            <person name="Garry L."/>
            <person name="Ghigo J.M."/>
            <person name="Gilles A.M."/>
            <person name="Johnson J."/>
            <person name="Le Bouguenec C."/>
            <person name="Lescat M."/>
            <person name="Mangenot S."/>
            <person name="Martinez-Jehanne V."/>
            <person name="Matic I."/>
            <person name="Nassif X."/>
            <person name="Oztas S."/>
            <person name="Petit M.A."/>
            <person name="Pichon C."/>
            <person name="Rouy Z."/>
            <person name="Ruf C.S."/>
            <person name="Schneider D."/>
            <person name="Tourret J."/>
            <person name="Vacherie B."/>
            <person name="Vallenet D."/>
            <person name="Medigue C."/>
            <person name="Rocha E.P.C."/>
            <person name="Denamur E."/>
        </authorList>
    </citation>
    <scope>NUCLEOTIDE SEQUENCE [LARGE SCALE GENOMIC DNA]</scope>
    <source>
        <strain>S88 / ExPEC</strain>
    </source>
</reference>
<protein>
    <recommendedName>
        <fullName evidence="1">Homoserine kinase</fullName>
        <shortName evidence="1">HK</shortName>
        <shortName evidence="1">HSK</shortName>
        <ecNumber evidence="1">2.7.1.39</ecNumber>
    </recommendedName>
</protein>
<gene>
    <name evidence="1" type="primary">thrB</name>
    <name type="ordered locus">ECS88_0003</name>
</gene>
<evidence type="ECO:0000255" key="1">
    <source>
        <dbReference type="HAMAP-Rule" id="MF_00384"/>
    </source>
</evidence>
<accession>B7M9R6</accession>
<organism>
    <name type="scientific">Escherichia coli O45:K1 (strain S88 / ExPEC)</name>
    <dbReference type="NCBI Taxonomy" id="585035"/>
    <lineage>
        <taxon>Bacteria</taxon>
        <taxon>Pseudomonadati</taxon>
        <taxon>Pseudomonadota</taxon>
        <taxon>Gammaproteobacteria</taxon>
        <taxon>Enterobacterales</taxon>
        <taxon>Enterobacteriaceae</taxon>
        <taxon>Escherichia</taxon>
    </lineage>
</organism>
<sequence length="310" mass="33610">MVKVYAPASSANMSVGFDVLGAAVTPVDGALLGDVVTVEAAETFSLNNLGRFADKLPSEPRENIVYQCWERFCQELGKQIPVAMTLEKNMPIGSGLGSSACSVVAALMAMNEHCGKPLNDTRLLALMGELEGRISGSIHYDNVAPCFLGGMQLMIEENDIISQQVPGFDEWLWVLAYPGIKVSTAEARAILPAQYRRQDCIAHGRHLAGFIHACYSRQPELAAKLMKDVIAEPYRERLLPGFRQARQAVAEIGAVASGISGSGPTLFALCDKPDTAQRVADWLGKNYLQNQEGFVHICRLDTAGARVLEN</sequence>
<dbReference type="EC" id="2.7.1.39" evidence="1"/>
<dbReference type="EMBL" id="CU928161">
    <property type="protein sequence ID" value="CAR01370.1"/>
    <property type="molecule type" value="Genomic_DNA"/>
</dbReference>
<dbReference type="RefSeq" id="WP_000241660.1">
    <property type="nucleotide sequence ID" value="NC_011742.1"/>
</dbReference>
<dbReference type="SMR" id="B7M9R6"/>
<dbReference type="GeneID" id="75202912"/>
<dbReference type="KEGG" id="ecz:ECS88_0003"/>
<dbReference type="HOGENOM" id="CLU_041243_1_1_6"/>
<dbReference type="UniPathway" id="UPA00050">
    <property type="reaction ID" value="UER00064"/>
</dbReference>
<dbReference type="Proteomes" id="UP000000747">
    <property type="component" value="Chromosome"/>
</dbReference>
<dbReference type="GO" id="GO:0005737">
    <property type="term" value="C:cytoplasm"/>
    <property type="evidence" value="ECO:0007669"/>
    <property type="project" value="UniProtKB-SubCell"/>
</dbReference>
<dbReference type="GO" id="GO:0005524">
    <property type="term" value="F:ATP binding"/>
    <property type="evidence" value="ECO:0007669"/>
    <property type="project" value="UniProtKB-UniRule"/>
</dbReference>
<dbReference type="GO" id="GO:0004413">
    <property type="term" value="F:homoserine kinase activity"/>
    <property type="evidence" value="ECO:0007669"/>
    <property type="project" value="UniProtKB-UniRule"/>
</dbReference>
<dbReference type="GO" id="GO:0009088">
    <property type="term" value="P:threonine biosynthetic process"/>
    <property type="evidence" value="ECO:0007669"/>
    <property type="project" value="UniProtKB-UniRule"/>
</dbReference>
<dbReference type="FunFam" id="3.30.230.10:FF:000020">
    <property type="entry name" value="Homoserine kinase"/>
    <property type="match status" value="1"/>
</dbReference>
<dbReference type="FunFam" id="3.30.70.890:FF:000002">
    <property type="entry name" value="Homoserine kinase"/>
    <property type="match status" value="1"/>
</dbReference>
<dbReference type="Gene3D" id="3.30.230.10">
    <property type="match status" value="1"/>
</dbReference>
<dbReference type="Gene3D" id="3.30.70.890">
    <property type="entry name" value="GHMP kinase, C-terminal domain"/>
    <property type="match status" value="1"/>
</dbReference>
<dbReference type="HAMAP" id="MF_00384">
    <property type="entry name" value="Homoser_kinase"/>
    <property type="match status" value="1"/>
</dbReference>
<dbReference type="InterPro" id="IPR013750">
    <property type="entry name" value="GHMP_kinase_C_dom"/>
</dbReference>
<dbReference type="InterPro" id="IPR036554">
    <property type="entry name" value="GHMP_kinase_C_sf"/>
</dbReference>
<dbReference type="InterPro" id="IPR006204">
    <property type="entry name" value="GHMP_kinase_N_dom"/>
</dbReference>
<dbReference type="InterPro" id="IPR006203">
    <property type="entry name" value="GHMP_knse_ATP-bd_CS"/>
</dbReference>
<dbReference type="InterPro" id="IPR000870">
    <property type="entry name" value="Homoserine_kinase"/>
</dbReference>
<dbReference type="InterPro" id="IPR020568">
    <property type="entry name" value="Ribosomal_Su5_D2-typ_SF"/>
</dbReference>
<dbReference type="InterPro" id="IPR014721">
    <property type="entry name" value="Ribsml_uS5_D2-typ_fold_subgr"/>
</dbReference>
<dbReference type="NCBIfam" id="NF002288">
    <property type="entry name" value="PRK01212.1-4"/>
    <property type="match status" value="1"/>
</dbReference>
<dbReference type="NCBIfam" id="TIGR00191">
    <property type="entry name" value="thrB"/>
    <property type="match status" value="1"/>
</dbReference>
<dbReference type="PANTHER" id="PTHR20861:SF1">
    <property type="entry name" value="HOMOSERINE KINASE"/>
    <property type="match status" value="1"/>
</dbReference>
<dbReference type="PANTHER" id="PTHR20861">
    <property type="entry name" value="HOMOSERINE/4-DIPHOSPHOCYTIDYL-2-C-METHYL-D-ERYTHRITOL KINASE"/>
    <property type="match status" value="1"/>
</dbReference>
<dbReference type="Pfam" id="PF08544">
    <property type="entry name" value="GHMP_kinases_C"/>
    <property type="match status" value="1"/>
</dbReference>
<dbReference type="Pfam" id="PF00288">
    <property type="entry name" value="GHMP_kinases_N"/>
    <property type="match status" value="1"/>
</dbReference>
<dbReference type="PIRSF" id="PIRSF000676">
    <property type="entry name" value="Homoser_kin"/>
    <property type="match status" value="1"/>
</dbReference>
<dbReference type="PRINTS" id="PR00958">
    <property type="entry name" value="HOMSERKINASE"/>
</dbReference>
<dbReference type="SUPFAM" id="SSF55060">
    <property type="entry name" value="GHMP Kinase, C-terminal domain"/>
    <property type="match status" value="1"/>
</dbReference>
<dbReference type="SUPFAM" id="SSF54211">
    <property type="entry name" value="Ribosomal protein S5 domain 2-like"/>
    <property type="match status" value="1"/>
</dbReference>
<dbReference type="PROSITE" id="PS00627">
    <property type="entry name" value="GHMP_KINASES_ATP"/>
    <property type="match status" value="1"/>
</dbReference>